<proteinExistence type="inferred from homology"/>
<feature type="chain" id="PRO_0000369592" description="Ribosome biogenesis protein YTM1">
    <location>
        <begin position="1"/>
        <end position="484"/>
    </location>
</feature>
<feature type="repeat" description="WD 1">
    <location>
        <begin position="121"/>
        <end position="160"/>
    </location>
</feature>
<feature type="repeat" description="WD 2">
    <location>
        <begin position="166"/>
        <end position="204"/>
    </location>
</feature>
<feature type="repeat" description="WD 3">
    <location>
        <begin position="215"/>
        <end position="254"/>
    </location>
</feature>
<feature type="repeat" description="WD 4">
    <location>
        <begin position="289"/>
        <end position="329"/>
    </location>
</feature>
<feature type="repeat" description="WD 5">
    <location>
        <begin position="331"/>
        <end position="372"/>
    </location>
</feature>
<feature type="repeat" description="WD 6">
    <location>
        <begin position="378"/>
        <end position="418"/>
    </location>
</feature>
<feature type="repeat" description="WD 7">
    <location>
        <begin position="448"/>
        <end position="484"/>
    </location>
</feature>
<feature type="region of interest" description="Ubiquitin-like (UBL) domain" evidence="1">
    <location>
        <begin position="11"/>
        <end position="94"/>
    </location>
</feature>
<keyword id="KW-0539">Nucleus</keyword>
<keyword id="KW-1185">Reference proteome</keyword>
<keyword id="KW-0677">Repeat</keyword>
<keyword id="KW-0690">Ribosome biogenesis</keyword>
<keyword id="KW-0698">rRNA processing</keyword>
<keyword id="KW-0853">WD repeat</keyword>
<accession>A4R2Q6</accession>
<accession>G4MRX3</accession>
<evidence type="ECO:0000255" key="1">
    <source>
        <dbReference type="HAMAP-Rule" id="MF_03029"/>
    </source>
</evidence>
<name>YTM1_PYRO7</name>
<protein>
    <recommendedName>
        <fullName evidence="1">Ribosome biogenesis protein YTM1</fullName>
    </recommendedName>
</protein>
<organism>
    <name type="scientific">Pyricularia oryzae (strain 70-15 / ATCC MYA-4617 / FGSC 8958)</name>
    <name type="common">Rice blast fungus</name>
    <name type="synonym">Magnaporthe oryzae</name>
    <dbReference type="NCBI Taxonomy" id="242507"/>
    <lineage>
        <taxon>Eukaryota</taxon>
        <taxon>Fungi</taxon>
        <taxon>Dikarya</taxon>
        <taxon>Ascomycota</taxon>
        <taxon>Pezizomycotina</taxon>
        <taxon>Sordariomycetes</taxon>
        <taxon>Sordariomycetidae</taxon>
        <taxon>Magnaporthales</taxon>
        <taxon>Pyriculariaceae</taxon>
        <taxon>Pyricularia</taxon>
    </lineage>
</organism>
<gene>
    <name evidence="1" type="primary">YTM1</name>
    <name type="ORF">MGG_02460</name>
</gene>
<comment type="function">
    <text evidence="1">Component of the NOP7 complex, which is required for maturation of the 25S and 5.8S ribosomal RNAs and formation of the 60S ribosome.</text>
</comment>
<comment type="subunit">
    <text evidence="1">Component of the NOP7 complex, composed of ERB1, NOP7 and YTM1. The complex is held together by ERB1, which interacts with NOP7 via its N-terminal domain and with YTM1 via a high-affinity interaction between the seven-bladed beta-propeller domains of the 2 proteins. The NOP7 complex associates with the 66S pre-ribosome. Interacts (via UBL domain) with MDN1 (via VWFA/MIDAS domain).</text>
</comment>
<comment type="subcellular location">
    <subcellularLocation>
        <location evidence="1">Nucleus</location>
        <location evidence="1">Nucleolus</location>
    </subcellularLocation>
    <subcellularLocation>
        <location evidence="1">Nucleus</location>
        <location evidence="1">Nucleoplasm</location>
    </subcellularLocation>
</comment>
<comment type="similarity">
    <text evidence="1">Belongs to the WD repeat WDR12/YTM1 family.</text>
</comment>
<dbReference type="EMBL" id="CM001231">
    <property type="protein sequence ID" value="EHA56642.1"/>
    <property type="molecule type" value="Genomic_DNA"/>
</dbReference>
<dbReference type="RefSeq" id="XP_003709254.1">
    <property type="nucleotide sequence ID" value="XM_003709206.1"/>
</dbReference>
<dbReference type="SMR" id="A4R2Q6"/>
<dbReference type="FunCoup" id="A4R2Q6">
    <property type="interactions" value="885"/>
</dbReference>
<dbReference type="STRING" id="242507.A4R2Q6"/>
<dbReference type="EnsemblFungi" id="MGG_02460T0">
    <property type="protein sequence ID" value="MGG_02460T0"/>
    <property type="gene ID" value="MGG_02460"/>
</dbReference>
<dbReference type="GeneID" id="2681557"/>
<dbReference type="KEGG" id="mgr:MGG_02460"/>
<dbReference type="VEuPathDB" id="FungiDB:MGG_02460"/>
<dbReference type="eggNOG" id="KOG0313">
    <property type="taxonomic scope" value="Eukaryota"/>
</dbReference>
<dbReference type="HOGENOM" id="CLU_000288_57_0_1"/>
<dbReference type="InParanoid" id="A4R2Q6"/>
<dbReference type="OMA" id="DHKYVEF"/>
<dbReference type="OrthoDB" id="10251381at2759"/>
<dbReference type="Proteomes" id="UP000009058">
    <property type="component" value="Chromosome 1"/>
</dbReference>
<dbReference type="GO" id="GO:0005654">
    <property type="term" value="C:nucleoplasm"/>
    <property type="evidence" value="ECO:0007669"/>
    <property type="project" value="UniProtKB-SubCell"/>
</dbReference>
<dbReference type="GO" id="GO:0070545">
    <property type="term" value="C:PeBoW complex"/>
    <property type="evidence" value="ECO:0007669"/>
    <property type="project" value="EnsemblFungi"/>
</dbReference>
<dbReference type="GO" id="GO:0030687">
    <property type="term" value="C:preribosome, large subunit precursor"/>
    <property type="evidence" value="ECO:0007669"/>
    <property type="project" value="UniProtKB-UniRule"/>
</dbReference>
<dbReference type="GO" id="GO:0043021">
    <property type="term" value="F:ribonucleoprotein complex binding"/>
    <property type="evidence" value="ECO:0007669"/>
    <property type="project" value="UniProtKB-UniRule"/>
</dbReference>
<dbReference type="GO" id="GO:0051276">
    <property type="term" value="P:chromosome organization"/>
    <property type="evidence" value="ECO:0007669"/>
    <property type="project" value="EnsemblFungi"/>
</dbReference>
<dbReference type="GO" id="GO:0000466">
    <property type="term" value="P:maturation of 5.8S rRNA from tricistronic rRNA transcript (SSU-rRNA, 5.8S rRNA, LSU-rRNA)"/>
    <property type="evidence" value="ECO:0007669"/>
    <property type="project" value="UniProtKB-UniRule"/>
</dbReference>
<dbReference type="GO" id="GO:0000463">
    <property type="term" value="P:maturation of LSU-rRNA from tricistronic rRNA transcript (SSU-rRNA, 5.8S rRNA, LSU-rRNA)"/>
    <property type="evidence" value="ECO:0007669"/>
    <property type="project" value="UniProtKB-UniRule"/>
</dbReference>
<dbReference type="GO" id="GO:0110136">
    <property type="term" value="P:protein-RNA complex remodeling"/>
    <property type="evidence" value="ECO:0007669"/>
    <property type="project" value="EnsemblFungi"/>
</dbReference>
<dbReference type="Gene3D" id="2.130.10.10">
    <property type="entry name" value="YVTN repeat-like/Quinoprotein amine dehydrogenase"/>
    <property type="match status" value="1"/>
</dbReference>
<dbReference type="HAMAP" id="MF_03029">
    <property type="entry name" value="WDR12"/>
    <property type="match status" value="1"/>
</dbReference>
<dbReference type="InterPro" id="IPR020472">
    <property type="entry name" value="G-protein_beta_WD-40_rep"/>
</dbReference>
<dbReference type="InterPro" id="IPR012972">
    <property type="entry name" value="NLE"/>
</dbReference>
<dbReference type="InterPro" id="IPR015943">
    <property type="entry name" value="WD40/YVTN_repeat-like_dom_sf"/>
</dbReference>
<dbReference type="InterPro" id="IPR019775">
    <property type="entry name" value="WD40_repeat_CS"/>
</dbReference>
<dbReference type="InterPro" id="IPR036322">
    <property type="entry name" value="WD40_repeat_dom_sf"/>
</dbReference>
<dbReference type="InterPro" id="IPR001680">
    <property type="entry name" value="WD40_rpt"/>
</dbReference>
<dbReference type="InterPro" id="IPR028599">
    <property type="entry name" value="WDR12/Ytm1"/>
</dbReference>
<dbReference type="PANTHER" id="PTHR19855:SF11">
    <property type="entry name" value="RIBOSOME BIOGENESIS PROTEIN WDR12"/>
    <property type="match status" value="1"/>
</dbReference>
<dbReference type="PANTHER" id="PTHR19855">
    <property type="entry name" value="WD40 REPEAT PROTEIN 12, 37"/>
    <property type="match status" value="1"/>
</dbReference>
<dbReference type="Pfam" id="PF08154">
    <property type="entry name" value="NLE"/>
    <property type="match status" value="1"/>
</dbReference>
<dbReference type="Pfam" id="PF00400">
    <property type="entry name" value="WD40"/>
    <property type="match status" value="4"/>
</dbReference>
<dbReference type="PRINTS" id="PR00320">
    <property type="entry name" value="GPROTEINBRPT"/>
</dbReference>
<dbReference type="SMART" id="SM00320">
    <property type="entry name" value="WD40"/>
    <property type="match status" value="7"/>
</dbReference>
<dbReference type="SUPFAM" id="SSF50978">
    <property type="entry name" value="WD40 repeat-like"/>
    <property type="match status" value="1"/>
</dbReference>
<dbReference type="PROSITE" id="PS00678">
    <property type="entry name" value="WD_REPEATS_1"/>
    <property type="match status" value="2"/>
</dbReference>
<dbReference type="PROSITE" id="PS50082">
    <property type="entry name" value="WD_REPEATS_2"/>
    <property type="match status" value="2"/>
</dbReference>
<dbReference type="PROSITE" id="PS50294">
    <property type="entry name" value="WD_REPEATS_REGION"/>
    <property type="match status" value="1"/>
</dbReference>
<sequence length="484" mass="52188">MNATTEQEAIVKVLFTTTEQGLELPESKRLLLVPADIRRYGLSRVLNSESMLNTAAPIPFDFLVNGTFLRTTLEDYLKENGLPFEKTVTLQYVRSLVPPAYEASFEHDDWVSSVDLLSATSSAGKWSGSSFLQGQDRILSASYDGLLRIWNGSGQALATSSVVNRGPLCGLKSAKFMSSTKIAAAGLDRTVRIWDYTEADDHFSGQLKPTLELYGHRSIIESLGVDGSSRRILTACADGSIGLWTTSKKLAPEAPTALLPQTYATKRRKGSTTSANIIAQRGALSLIPVHSRPVSAAIFDPQNQHTAYSASQDHTLKVLDLTTSRVVSTITTSNALMSACYLSNKSAPLIAAGTSSRNVTLIDPRESAAATSVMTLRGHINVVSSVSASPDNEYSLVSGSHDGTCRIWDLRSVRPAAGKEETGLGSVGESVYLIERESLGDKKRPLAGEGVKVFDVQWDKTWGIVSGGEDKKVQINKGRNIISS</sequence>
<reference key="1">
    <citation type="journal article" date="2005" name="Nature">
        <title>The genome sequence of the rice blast fungus Magnaporthe grisea.</title>
        <authorList>
            <person name="Dean R.A."/>
            <person name="Talbot N.J."/>
            <person name="Ebbole D.J."/>
            <person name="Farman M.L."/>
            <person name="Mitchell T.K."/>
            <person name="Orbach M.J."/>
            <person name="Thon M.R."/>
            <person name="Kulkarni R."/>
            <person name="Xu J.-R."/>
            <person name="Pan H."/>
            <person name="Read N.D."/>
            <person name="Lee Y.-H."/>
            <person name="Carbone I."/>
            <person name="Brown D."/>
            <person name="Oh Y.Y."/>
            <person name="Donofrio N."/>
            <person name="Jeong J.S."/>
            <person name="Soanes D.M."/>
            <person name="Djonovic S."/>
            <person name="Kolomiets E."/>
            <person name="Rehmeyer C."/>
            <person name="Li W."/>
            <person name="Harding M."/>
            <person name="Kim S."/>
            <person name="Lebrun M.-H."/>
            <person name="Bohnert H."/>
            <person name="Coughlan S."/>
            <person name="Butler J."/>
            <person name="Calvo S.E."/>
            <person name="Ma L.-J."/>
            <person name="Nicol R."/>
            <person name="Purcell S."/>
            <person name="Nusbaum C."/>
            <person name="Galagan J.E."/>
            <person name="Birren B.W."/>
        </authorList>
    </citation>
    <scope>NUCLEOTIDE SEQUENCE [LARGE SCALE GENOMIC DNA]</scope>
    <source>
        <strain>70-15 / ATCC MYA-4617 / FGSC 8958</strain>
    </source>
</reference>